<dbReference type="EMBL" id="X67338">
    <property type="protein sequence ID" value="CAA47753.1"/>
    <property type="status" value="ALT_INIT"/>
    <property type="molecule type" value="mRNA"/>
</dbReference>
<dbReference type="EMBL" id="X79806">
    <property type="protein sequence ID" value="CAA56201.1"/>
    <property type="molecule type" value="mRNA"/>
</dbReference>
<dbReference type="EMBL" id="AF043537">
    <property type="protein sequence ID" value="AAC32073.1"/>
    <property type="molecule type" value="mRNA"/>
</dbReference>
<dbReference type="EMBL" id="AL162295">
    <property type="protein sequence ID" value="CAB82686.1"/>
    <property type="molecule type" value="Genomic_DNA"/>
</dbReference>
<dbReference type="EMBL" id="CP002686">
    <property type="protein sequence ID" value="AEE80112.1"/>
    <property type="molecule type" value="Genomic_DNA"/>
</dbReference>
<dbReference type="EMBL" id="CP002686">
    <property type="protein sequence ID" value="AEE80114.1"/>
    <property type="molecule type" value="Genomic_DNA"/>
</dbReference>
<dbReference type="EMBL" id="AY062790">
    <property type="protein sequence ID" value="AAL32868.1"/>
    <property type="molecule type" value="mRNA"/>
</dbReference>
<dbReference type="EMBL" id="AY081571">
    <property type="protein sequence ID" value="AAM10133.1"/>
    <property type="molecule type" value="mRNA"/>
</dbReference>
<dbReference type="EMBL" id="AY086619">
    <property type="protein sequence ID" value="AAM63678.1"/>
    <property type="molecule type" value="mRNA"/>
</dbReference>
<dbReference type="EMBL" id="AK220787">
    <property type="protein sequence ID" value="BAD94023.1"/>
    <property type="molecule type" value="mRNA"/>
</dbReference>
<dbReference type="EMBL" id="Z26405">
    <property type="protein sequence ID" value="CAA81240.1"/>
    <property type="molecule type" value="mRNA"/>
</dbReference>
<dbReference type="PIR" id="T47893">
    <property type="entry name" value="T47893"/>
</dbReference>
<dbReference type="RefSeq" id="NP_001190146.1">
    <molecule id="P42742-1"/>
    <property type="nucleotide sequence ID" value="NM_001203217.1"/>
</dbReference>
<dbReference type="RefSeq" id="NP_191641.1">
    <molecule id="P42742-1"/>
    <property type="nucleotide sequence ID" value="NM_115946.3"/>
</dbReference>
<dbReference type="SMR" id="P42742"/>
<dbReference type="BioGRID" id="10567">
    <property type="interactions" value="82"/>
</dbReference>
<dbReference type="FunCoup" id="P42742">
    <property type="interactions" value="4660"/>
</dbReference>
<dbReference type="IntAct" id="P42742">
    <property type="interactions" value="11"/>
</dbReference>
<dbReference type="STRING" id="3702.P42742"/>
<dbReference type="iPTMnet" id="P42742"/>
<dbReference type="PaxDb" id="3702-AT3G60820.1"/>
<dbReference type="ProteomicsDB" id="226348">
    <molecule id="P42742-1"/>
</dbReference>
<dbReference type="EnsemblPlants" id="AT3G60820.1">
    <molecule id="P42742-1"/>
    <property type="protein sequence ID" value="AT3G60820.1"/>
    <property type="gene ID" value="AT3G60820"/>
</dbReference>
<dbReference type="EnsemblPlants" id="AT3G60820.3">
    <molecule id="P42742-1"/>
    <property type="protein sequence ID" value="AT3G60820.3"/>
    <property type="gene ID" value="AT3G60820"/>
</dbReference>
<dbReference type="GeneID" id="825253"/>
<dbReference type="Gramene" id="AT3G60820.1">
    <molecule id="P42742-1"/>
    <property type="protein sequence ID" value="AT3G60820.1"/>
    <property type="gene ID" value="AT3G60820"/>
</dbReference>
<dbReference type="Gramene" id="AT3G60820.3">
    <molecule id="P42742-1"/>
    <property type="protein sequence ID" value="AT3G60820.3"/>
    <property type="gene ID" value="AT3G60820"/>
</dbReference>
<dbReference type="KEGG" id="ath:AT3G60820"/>
<dbReference type="Araport" id="AT3G60820"/>
<dbReference type="TAIR" id="AT3G60820">
    <property type="gene designation" value="PBF1"/>
</dbReference>
<dbReference type="eggNOG" id="KOG0179">
    <property type="taxonomic scope" value="Eukaryota"/>
</dbReference>
<dbReference type="HOGENOM" id="CLU_035750_1_1_1"/>
<dbReference type="InParanoid" id="P42742"/>
<dbReference type="OMA" id="CSGCWCD"/>
<dbReference type="OrthoDB" id="1029941at2759"/>
<dbReference type="PhylomeDB" id="P42742"/>
<dbReference type="CD-CODE" id="4299E36E">
    <property type="entry name" value="Nucleolus"/>
</dbReference>
<dbReference type="PRO" id="PR:P42742"/>
<dbReference type="Proteomes" id="UP000006548">
    <property type="component" value="Chromosome 3"/>
</dbReference>
<dbReference type="ExpressionAtlas" id="P42742">
    <property type="expression patterns" value="baseline and differential"/>
</dbReference>
<dbReference type="GO" id="GO:0005829">
    <property type="term" value="C:cytosol"/>
    <property type="evidence" value="ECO:0007005"/>
    <property type="project" value="TAIR"/>
</dbReference>
<dbReference type="GO" id="GO:0005634">
    <property type="term" value="C:nucleus"/>
    <property type="evidence" value="ECO:0007669"/>
    <property type="project" value="UniProtKB-SubCell"/>
</dbReference>
<dbReference type="GO" id="GO:0005886">
    <property type="term" value="C:plasma membrane"/>
    <property type="evidence" value="ECO:0007005"/>
    <property type="project" value="TAIR"/>
</dbReference>
<dbReference type="GO" id="GO:0000502">
    <property type="term" value="C:proteasome complex"/>
    <property type="evidence" value="ECO:0000314"/>
    <property type="project" value="TAIR"/>
</dbReference>
<dbReference type="GO" id="GO:0019774">
    <property type="term" value="C:proteasome core complex, beta-subunit complex"/>
    <property type="evidence" value="ECO:0000250"/>
    <property type="project" value="UniProtKB"/>
</dbReference>
<dbReference type="GO" id="GO:0050832">
    <property type="term" value="P:defense response to fungus"/>
    <property type="evidence" value="ECO:0000314"/>
    <property type="project" value="TAIR"/>
</dbReference>
<dbReference type="GO" id="GO:0051603">
    <property type="term" value="P:proteolysis involved in protein catabolic process"/>
    <property type="evidence" value="ECO:0007669"/>
    <property type="project" value="InterPro"/>
</dbReference>
<dbReference type="CDD" id="cd03757">
    <property type="entry name" value="proteasome_beta_type_1"/>
    <property type="match status" value="1"/>
</dbReference>
<dbReference type="FunFam" id="3.60.20.10:FF:000040">
    <property type="entry name" value="Proteasome subunit beta"/>
    <property type="match status" value="1"/>
</dbReference>
<dbReference type="Gene3D" id="3.60.20.10">
    <property type="entry name" value="Glutamine Phosphoribosylpyrophosphate, subunit 1, domain 1"/>
    <property type="match status" value="1"/>
</dbReference>
<dbReference type="InterPro" id="IPR029055">
    <property type="entry name" value="Ntn_hydrolases_N"/>
</dbReference>
<dbReference type="InterPro" id="IPR016050">
    <property type="entry name" value="Proteasome_bsu_CS"/>
</dbReference>
<dbReference type="InterPro" id="IPR001353">
    <property type="entry name" value="Proteasome_sua/b"/>
</dbReference>
<dbReference type="InterPro" id="IPR023333">
    <property type="entry name" value="Proteasome_suB-type"/>
</dbReference>
<dbReference type="PANTHER" id="PTHR32194">
    <property type="entry name" value="METALLOPROTEASE TLDD"/>
    <property type="match status" value="1"/>
</dbReference>
<dbReference type="PANTHER" id="PTHR32194:SF2">
    <property type="entry name" value="PROTEASOME SUBUNIT BETA TYPE-1"/>
    <property type="match status" value="1"/>
</dbReference>
<dbReference type="Pfam" id="PF00227">
    <property type="entry name" value="Proteasome"/>
    <property type="match status" value="1"/>
</dbReference>
<dbReference type="SUPFAM" id="SSF56235">
    <property type="entry name" value="N-terminal nucleophile aminohydrolases (Ntn hydrolases)"/>
    <property type="match status" value="1"/>
</dbReference>
<dbReference type="PROSITE" id="PS00854">
    <property type="entry name" value="PROTEASOME_BETA_1"/>
    <property type="match status" value="1"/>
</dbReference>
<dbReference type="PROSITE" id="PS51476">
    <property type="entry name" value="PROTEASOME_BETA_2"/>
    <property type="match status" value="1"/>
</dbReference>
<comment type="function">
    <text>Non-catalytic component of the proteasome, a multicatalytic proteinase complex which is characterized by its ability to cleave peptides with Arg, Phe, Tyr, Leu, and Glu adjacent to the leaving group at neutral or slightly basic pH. The proteasome has an ATP-dependent proteolytic activity.</text>
</comment>
<comment type="subunit">
    <text evidence="3 4 5">Component of the 20S core complex of the 26S proteasome. The 26S proteasome is composed of a core protease (CP), known as the 20S proteasome, capped at one or both ends by the 19S regulatory particle (RP/PA700). The 20S proteasome core is composed of 28 subunits that are arranged in four stacked rings, resulting in a barrel-shaped structure. The two end rings are each formed by seven alpha subunits, and the two central rings are each formed by seven beta subunits. The catalytic chamber with the active sites is on the inside of the barrel.</text>
</comment>
<comment type="subcellular location">
    <subcellularLocation>
        <location evidence="2">Cytoplasm</location>
    </subcellularLocation>
    <subcellularLocation>
        <location evidence="1">Nucleus</location>
    </subcellularLocation>
</comment>
<comment type="alternative products">
    <event type="alternative splicing"/>
    <isoform>
        <id>P42742-1</id>
        <name>1</name>
        <sequence type="displayed"/>
    </isoform>
    <text>A number of isoforms are produced. According to EST sequences.</text>
</comment>
<comment type="tissue specificity">
    <text evidence="6">Present in all tissues examined. Slightly lower levels in roots.</text>
</comment>
<comment type="developmental stage">
    <text>Expressed at maximal levels after first day of cell growth.</text>
</comment>
<comment type="induction">
    <text evidence="6">During cell proliferation.</text>
</comment>
<comment type="similarity">
    <text evidence="2">Belongs to the peptidase T1B family.</text>
</comment>
<comment type="sequence caution" evidence="7">
    <conflict type="erroneous initiation">
        <sequence resource="EMBL-CDS" id="CAA47753"/>
    </conflict>
    <text>Extended N-terminus.</text>
</comment>
<keyword id="KW-0025">Alternative splicing</keyword>
<keyword id="KW-0963">Cytoplasm</keyword>
<keyword id="KW-0539">Nucleus</keyword>
<keyword id="KW-0647">Proteasome</keyword>
<keyword id="KW-1185">Reference proteome</keyword>
<reference key="1">
    <citation type="journal article" date="1994" name="Plant J.">
        <title>Molecular characterization of a beta-type proteasome subunit from Arabidopsis thaliana co-expressed at a high level with an alpha-type proteasome subunit early in the cell cycle.</title>
        <authorList>
            <person name="Genschik P."/>
            <person name="Jamet E."/>
            <person name="Phillips G."/>
            <person name="Parmentier Y."/>
            <person name="Gigot C."/>
            <person name="Fleck J."/>
        </authorList>
    </citation>
    <scope>NUCLEOTIDE SEQUENCE [MRNA]</scope>
    <scope>TISSUE SPECIFICITY</scope>
    <scope>INDUCTION</scope>
    <source>
        <strain>cv. Columbia</strain>
        <tissue>Leaf</tissue>
    </source>
</reference>
<reference key="2">
    <citation type="journal article" date="1998" name="Genetics">
        <title>Molecular organization of the 20S proteasome gene family from Arabidopsis thaliana.</title>
        <authorList>
            <person name="Fu H."/>
            <person name="Doelling J.H."/>
            <person name="Arendt C.S."/>
            <person name="Hochstrasser M."/>
            <person name="Vierstra R.D."/>
        </authorList>
    </citation>
    <scope>NUCLEOTIDE SEQUENCE [MRNA]</scope>
    <scope>GENE FAMILY</scope>
    <scope>NOMENCLATURE</scope>
    <source>
        <strain>cv. Columbia</strain>
    </source>
</reference>
<reference key="3">
    <citation type="journal article" date="2000" name="Nature">
        <title>Sequence and analysis of chromosome 3 of the plant Arabidopsis thaliana.</title>
        <authorList>
            <person name="Salanoubat M."/>
            <person name="Lemcke K."/>
            <person name="Rieger M."/>
            <person name="Ansorge W."/>
            <person name="Unseld M."/>
            <person name="Fartmann B."/>
            <person name="Valle G."/>
            <person name="Bloecker H."/>
            <person name="Perez-Alonso M."/>
            <person name="Obermaier B."/>
            <person name="Delseny M."/>
            <person name="Boutry M."/>
            <person name="Grivell L.A."/>
            <person name="Mache R."/>
            <person name="Puigdomenech P."/>
            <person name="De Simone V."/>
            <person name="Choisne N."/>
            <person name="Artiguenave F."/>
            <person name="Robert C."/>
            <person name="Brottier P."/>
            <person name="Wincker P."/>
            <person name="Cattolico L."/>
            <person name="Weissenbach J."/>
            <person name="Saurin W."/>
            <person name="Quetier F."/>
            <person name="Schaefer M."/>
            <person name="Mueller-Auer S."/>
            <person name="Gabel C."/>
            <person name="Fuchs M."/>
            <person name="Benes V."/>
            <person name="Wurmbach E."/>
            <person name="Drzonek H."/>
            <person name="Erfle H."/>
            <person name="Jordan N."/>
            <person name="Bangert S."/>
            <person name="Wiedelmann R."/>
            <person name="Kranz H."/>
            <person name="Voss H."/>
            <person name="Holland R."/>
            <person name="Brandt P."/>
            <person name="Nyakatura G."/>
            <person name="Vezzi A."/>
            <person name="D'Angelo M."/>
            <person name="Pallavicini A."/>
            <person name="Toppo S."/>
            <person name="Simionati B."/>
            <person name="Conrad A."/>
            <person name="Hornischer K."/>
            <person name="Kauer G."/>
            <person name="Loehnert T.-H."/>
            <person name="Nordsiek G."/>
            <person name="Reichelt J."/>
            <person name="Scharfe M."/>
            <person name="Schoen O."/>
            <person name="Bargues M."/>
            <person name="Terol J."/>
            <person name="Climent J."/>
            <person name="Navarro P."/>
            <person name="Collado C."/>
            <person name="Perez-Perez A."/>
            <person name="Ottenwaelder B."/>
            <person name="Duchemin D."/>
            <person name="Cooke R."/>
            <person name="Laudie M."/>
            <person name="Berger-Llauro C."/>
            <person name="Purnelle B."/>
            <person name="Masuy D."/>
            <person name="de Haan M."/>
            <person name="Maarse A.C."/>
            <person name="Alcaraz J.-P."/>
            <person name="Cottet A."/>
            <person name="Casacuberta E."/>
            <person name="Monfort A."/>
            <person name="Argiriou A."/>
            <person name="Flores M."/>
            <person name="Liguori R."/>
            <person name="Vitale D."/>
            <person name="Mannhaupt G."/>
            <person name="Haase D."/>
            <person name="Schoof H."/>
            <person name="Rudd S."/>
            <person name="Zaccaria P."/>
            <person name="Mewes H.-W."/>
            <person name="Mayer K.F.X."/>
            <person name="Kaul S."/>
            <person name="Town C.D."/>
            <person name="Koo H.L."/>
            <person name="Tallon L.J."/>
            <person name="Jenkins J."/>
            <person name="Rooney T."/>
            <person name="Rizzo M."/>
            <person name="Walts A."/>
            <person name="Utterback T."/>
            <person name="Fujii C.Y."/>
            <person name="Shea T.P."/>
            <person name="Creasy T.H."/>
            <person name="Haas B."/>
            <person name="Maiti R."/>
            <person name="Wu D."/>
            <person name="Peterson J."/>
            <person name="Van Aken S."/>
            <person name="Pai G."/>
            <person name="Militscher J."/>
            <person name="Sellers P."/>
            <person name="Gill J.E."/>
            <person name="Feldblyum T.V."/>
            <person name="Preuss D."/>
            <person name="Lin X."/>
            <person name="Nierman W.C."/>
            <person name="Salzberg S.L."/>
            <person name="White O."/>
            <person name="Venter J.C."/>
            <person name="Fraser C.M."/>
            <person name="Kaneko T."/>
            <person name="Nakamura Y."/>
            <person name="Sato S."/>
            <person name="Kato T."/>
            <person name="Asamizu E."/>
            <person name="Sasamoto S."/>
            <person name="Kimura T."/>
            <person name="Idesawa K."/>
            <person name="Kawashima K."/>
            <person name="Kishida Y."/>
            <person name="Kiyokawa C."/>
            <person name="Kohara M."/>
            <person name="Matsumoto M."/>
            <person name="Matsuno A."/>
            <person name="Muraki A."/>
            <person name="Nakayama S."/>
            <person name="Nakazaki N."/>
            <person name="Shinpo S."/>
            <person name="Takeuchi C."/>
            <person name="Wada T."/>
            <person name="Watanabe A."/>
            <person name="Yamada M."/>
            <person name="Yasuda M."/>
            <person name="Tabata S."/>
        </authorList>
    </citation>
    <scope>NUCLEOTIDE SEQUENCE [LARGE SCALE GENOMIC DNA]</scope>
    <source>
        <strain>cv. Columbia</strain>
    </source>
</reference>
<reference key="4">
    <citation type="journal article" date="2017" name="Plant J.">
        <title>Araport11: a complete reannotation of the Arabidopsis thaliana reference genome.</title>
        <authorList>
            <person name="Cheng C.Y."/>
            <person name="Krishnakumar V."/>
            <person name="Chan A.P."/>
            <person name="Thibaud-Nissen F."/>
            <person name="Schobel S."/>
            <person name="Town C.D."/>
        </authorList>
    </citation>
    <scope>GENOME REANNOTATION</scope>
    <source>
        <strain>cv. Columbia</strain>
    </source>
</reference>
<reference key="5">
    <citation type="journal article" date="2003" name="Science">
        <title>Empirical analysis of transcriptional activity in the Arabidopsis genome.</title>
        <authorList>
            <person name="Yamada K."/>
            <person name="Lim J."/>
            <person name="Dale J.M."/>
            <person name="Chen H."/>
            <person name="Shinn P."/>
            <person name="Palm C.J."/>
            <person name="Southwick A.M."/>
            <person name="Wu H.C."/>
            <person name="Kim C.J."/>
            <person name="Nguyen M."/>
            <person name="Pham P.K."/>
            <person name="Cheuk R.F."/>
            <person name="Karlin-Newmann G."/>
            <person name="Liu S.X."/>
            <person name="Lam B."/>
            <person name="Sakano H."/>
            <person name="Wu T."/>
            <person name="Yu G."/>
            <person name="Miranda M."/>
            <person name="Quach H.L."/>
            <person name="Tripp M."/>
            <person name="Chang C.H."/>
            <person name="Lee J.M."/>
            <person name="Toriumi M.J."/>
            <person name="Chan M.M."/>
            <person name="Tang C.C."/>
            <person name="Onodera C.S."/>
            <person name="Deng J.M."/>
            <person name="Akiyama K."/>
            <person name="Ansari Y."/>
            <person name="Arakawa T."/>
            <person name="Banh J."/>
            <person name="Banno F."/>
            <person name="Bowser L."/>
            <person name="Brooks S.Y."/>
            <person name="Carninci P."/>
            <person name="Chao Q."/>
            <person name="Choy N."/>
            <person name="Enju A."/>
            <person name="Goldsmith A.D."/>
            <person name="Gurjal M."/>
            <person name="Hansen N.F."/>
            <person name="Hayashizaki Y."/>
            <person name="Johnson-Hopson C."/>
            <person name="Hsuan V.W."/>
            <person name="Iida K."/>
            <person name="Karnes M."/>
            <person name="Khan S."/>
            <person name="Koesema E."/>
            <person name="Ishida J."/>
            <person name="Jiang P.X."/>
            <person name="Jones T."/>
            <person name="Kawai J."/>
            <person name="Kamiya A."/>
            <person name="Meyers C."/>
            <person name="Nakajima M."/>
            <person name="Narusaka M."/>
            <person name="Seki M."/>
            <person name="Sakurai T."/>
            <person name="Satou M."/>
            <person name="Tamse R."/>
            <person name="Vaysberg M."/>
            <person name="Wallender E.K."/>
            <person name="Wong C."/>
            <person name="Yamamura Y."/>
            <person name="Yuan S."/>
            <person name="Shinozaki K."/>
            <person name="Davis R.W."/>
            <person name="Theologis A."/>
            <person name="Ecker J.R."/>
        </authorList>
    </citation>
    <scope>NUCLEOTIDE SEQUENCE [LARGE SCALE MRNA]</scope>
    <source>
        <strain>cv. Columbia</strain>
    </source>
</reference>
<reference key="6">
    <citation type="submission" date="2002-03" db="EMBL/GenBank/DDBJ databases">
        <title>Full-length cDNA from Arabidopsis thaliana.</title>
        <authorList>
            <person name="Brover V.V."/>
            <person name="Troukhan M.E."/>
            <person name="Alexandrov N.A."/>
            <person name="Lu Y.-P."/>
            <person name="Flavell R.B."/>
            <person name="Feldmann K.A."/>
        </authorList>
    </citation>
    <scope>NUCLEOTIDE SEQUENCE [LARGE SCALE MRNA]</scope>
</reference>
<reference key="7">
    <citation type="submission" date="2005-03" db="EMBL/GenBank/DDBJ databases">
        <title>Large-scale analysis of RIKEN Arabidopsis full-length (RAFL) cDNAs.</title>
        <authorList>
            <person name="Totoki Y."/>
            <person name="Seki M."/>
            <person name="Ishida J."/>
            <person name="Nakajima M."/>
            <person name="Enju A."/>
            <person name="Kamiya A."/>
            <person name="Narusaka M."/>
            <person name="Shin-i T."/>
            <person name="Nakagawa M."/>
            <person name="Sakamoto N."/>
            <person name="Oishi K."/>
            <person name="Kohara Y."/>
            <person name="Kobayashi M."/>
            <person name="Toyoda A."/>
            <person name="Sakaki Y."/>
            <person name="Sakurai T."/>
            <person name="Iida K."/>
            <person name="Akiyama K."/>
            <person name="Satou M."/>
            <person name="Toyoda T."/>
            <person name="Konagaya A."/>
            <person name="Carninci P."/>
            <person name="Kawai J."/>
            <person name="Hayashizaki Y."/>
            <person name="Shinozaki K."/>
        </authorList>
    </citation>
    <scope>NUCLEOTIDE SEQUENCE [LARGE SCALE MRNA] OF 168-223</scope>
    <source>
        <strain>cv. Columbia</strain>
    </source>
</reference>
<reference key="8">
    <citation type="submission" date="1993-09" db="EMBL/GenBank/DDBJ databases">
        <title>The Arabidopsis thaliana transcribed genome: the GDR cDNA program.</title>
        <authorList>
            <person name="Philipps G."/>
            <person name="Gigot C."/>
        </authorList>
    </citation>
    <scope>NUCLEOTIDE SEQUENCE [MRNA] OF 188-223</scope>
</reference>
<reference key="9">
    <citation type="journal article" date="1999" name="Mol. Biol. Rep.">
        <title>Structure and functional analyses of the 26S proteasome subunits from plants.</title>
        <authorList>
            <person name="Fu H."/>
            <person name="Girod P.-A."/>
            <person name="Doelling J.H."/>
            <person name="van Nocker S."/>
            <person name="Hochstrasser M."/>
            <person name="Finley D."/>
            <person name="Vierstra R.D."/>
        </authorList>
    </citation>
    <scope>SUBUNIT</scope>
</reference>
<reference key="10">
    <citation type="journal article" date="2004" name="J. Biol. Chem.">
        <title>Purification of the Arabidopsis 26 S proteasome: biochemical and molecular analyses revealed the presence of multiple isoforms.</title>
        <authorList>
            <person name="Yang P."/>
            <person name="Fu H."/>
            <person name="Walker J."/>
            <person name="Papa C.M."/>
            <person name="Smalle J."/>
            <person name="Ju Y.-M."/>
            <person name="Vierstra R.D."/>
        </authorList>
    </citation>
    <scope>SUBUNIT</scope>
    <scope>IDENTIFICATION BY MASS SPECTROMETRY</scope>
</reference>
<reference key="11">
    <citation type="journal article" date="2010" name="J. Biol. Chem.">
        <title>Affinity purification of the Arabidopsis 26 S proteasome reveals a diverse array of plant proteolytic complexes.</title>
        <authorList>
            <person name="Book A.J."/>
            <person name="Gladman N.P."/>
            <person name="Lee S.S."/>
            <person name="Scalf M."/>
            <person name="Smith L.M."/>
            <person name="Vierstra R.D."/>
        </authorList>
    </citation>
    <scope>IDENTIFICATION BY MASS SPECTROMETRY</scope>
    <scope>CHARACTERIZATION OF THE 26S PROTEASOME COMPLEX</scope>
    <scope>SUBUNIT</scope>
</reference>
<proteinExistence type="evidence at protein level"/>
<sequence length="223" mass="24644">MTKQHANWSPYDNNGGTCVAIAGSDYCVIAADTRMSTGYSILSRDYSKIHKLADRAVLSSSGFQADVKALQKVLKSRHLIYQHQHNKQMSCPAMAQLLSNTLYFKRFFPYYAFNVLGGLDEEGKGCVFTYDAVGSYERVGYGAQGSGSTLIMPFLDNQLKSPSPLLLPKQDSNTPLSEAEAVDLVKTVFASATERDIYTGDKLEIMILKADGIKTELMDLRKD</sequence>
<accession>P42742</accession>
<accession>P42741</accession>
<accession>Q570C3</accession>
<accession>Q6LAD2</accession>
<accession>Q9SBI6</accession>
<evidence type="ECO:0000250" key="1"/>
<evidence type="ECO:0000255" key="2">
    <source>
        <dbReference type="PROSITE-ProRule" id="PRU00809"/>
    </source>
</evidence>
<evidence type="ECO:0000269" key="3">
    <source>
    </source>
</evidence>
<evidence type="ECO:0000269" key="4">
    <source>
    </source>
</evidence>
<evidence type="ECO:0000269" key="5">
    <source>
    </source>
</evidence>
<evidence type="ECO:0000269" key="6">
    <source>
    </source>
</evidence>
<evidence type="ECO:0000305" key="7"/>
<protein>
    <recommendedName>
        <fullName>Proteasome subunit beta type-1</fullName>
    </recommendedName>
    <alternativeName>
        <fullName>20S proteasome beta subunit F-1</fullName>
    </alternativeName>
    <alternativeName>
        <fullName>Proteasome component 5</fullName>
    </alternativeName>
    <alternativeName>
        <fullName>Proteasome subunit beta type-6</fullName>
    </alternativeName>
    <alternativeName>
        <fullName>TAS-F22/FAFP98</fullName>
    </alternativeName>
    <alternativeName>
        <fullName>TAS-G39.20</fullName>
    </alternativeName>
</protein>
<gene>
    <name type="primary">PBF1</name>
    <name type="synonym">PRC5</name>
    <name type="ordered locus">At3g60820</name>
    <name type="ORF">T4C21_230</name>
</gene>
<name>PSB1_ARATH</name>
<feature type="chain" id="PRO_0000148038" description="Proteasome subunit beta type-1">
    <location>
        <begin position="1"/>
        <end position="223"/>
    </location>
</feature>
<organism>
    <name type="scientific">Arabidopsis thaliana</name>
    <name type="common">Mouse-ear cress</name>
    <dbReference type="NCBI Taxonomy" id="3702"/>
    <lineage>
        <taxon>Eukaryota</taxon>
        <taxon>Viridiplantae</taxon>
        <taxon>Streptophyta</taxon>
        <taxon>Embryophyta</taxon>
        <taxon>Tracheophyta</taxon>
        <taxon>Spermatophyta</taxon>
        <taxon>Magnoliopsida</taxon>
        <taxon>eudicotyledons</taxon>
        <taxon>Gunneridae</taxon>
        <taxon>Pentapetalae</taxon>
        <taxon>rosids</taxon>
        <taxon>malvids</taxon>
        <taxon>Brassicales</taxon>
        <taxon>Brassicaceae</taxon>
        <taxon>Camelineae</taxon>
        <taxon>Arabidopsis</taxon>
    </lineage>
</organism>